<evidence type="ECO:0000255" key="1">
    <source>
        <dbReference type="HAMAP-Rule" id="MF_01569"/>
    </source>
</evidence>
<name>SYP_STRS2</name>
<protein>
    <recommendedName>
        <fullName evidence="1">Proline--tRNA ligase</fullName>
        <ecNumber evidence="1">6.1.1.15</ecNumber>
    </recommendedName>
    <alternativeName>
        <fullName evidence="1">Prolyl-tRNA synthetase</fullName>
        <shortName evidence="1">ProRS</shortName>
    </alternativeName>
</protein>
<organism>
    <name type="scientific">Streptococcus suis (strain 98HAH33)</name>
    <dbReference type="NCBI Taxonomy" id="391296"/>
    <lineage>
        <taxon>Bacteria</taxon>
        <taxon>Bacillati</taxon>
        <taxon>Bacillota</taxon>
        <taxon>Bacilli</taxon>
        <taxon>Lactobacillales</taxon>
        <taxon>Streptococcaceae</taxon>
        <taxon>Streptococcus</taxon>
    </lineage>
</organism>
<accession>A4W435</accession>
<comment type="function">
    <text evidence="1">Catalyzes the attachment of proline to tRNA(Pro) in a two-step reaction: proline is first activated by ATP to form Pro-AMP and then transferred to the acceptor end of tRNA(Pro). As ProRS can inadvertently accommodate and process non-cognate amino acids such as alanine and cysteine, to avoid such errors it has two additional distinct editing activities against alanine. One activity is designated as 'pretransfer' editing and involves the tRNA(Pro)-independent hydrolysis of activated Ala-AMP. The other activity is designated 'posttransfer' editing and involves deacylation of mischarged Ala-tRNA(Pro). The misacylated Cys-tRNA(Pro) is not edited by ProRS.</text>
</comment>
<comment type="catalytic activity">
    <reaction evidence="1">
        <text>tRNA(Pro) + L-proline + ATP = L-prolyl-tRNA(Pro) + AMP + diphosphate</text>
        <dbReference type="Rhea" id="RHEA:14305"/>
        <dbReference type="Rhea" id="RHEA-COMP:9700"/>
        <dbReference type="Rhea" id="RHEA-COMP:9702"/>
        <dbReference type="ChEBI" id="CHEBI:30616"/>
        <dbReference type="ChEBI" id="CHEBI:33019"/>
        <dbReference type="ChEBI" id="CHEBI:60039"/>
        <dbReference type="ChEBI" id="CHEBI:78442"/>
        <dbReference type="ChEBI" id="CHEBI:78532"/>
        <dbReference type="ChEBI" id="CHEBI:456215"/>
        <dbReference type="EC" id="6.1.1.15"/>
    </reaction>
</comment>
<comment type="subunit">
    <text evidence="1">Homodimer.</text>
</comment>
<comment type="subcellular location">
    <subcellularLocation>
        <location evidence="1">Cytoplasm</location>
    </subcellularLocation>
</comment>
<comment type="domain">
    <text evidence="1">Consists of three domains: the N-terminal catalytic domain, the editing domain and the C-terminal anticodon-binding domain.</text>
</comment>
<comment type="similarity">
    <text evidence="1">Belongs to the class-II aminoacyl-tRNA synthetase family. ProS type 1 subfamily.</text>
</comment>
<sequence length="620" mass="68502">MKQSKMIIPTLREMPSDASVISHALMLRAGYVRQISAGIYSYLPLANRVIEKAKNIMREEFDKIDAIEFLAPALLSADIWRESGRYETYGDDLYKLKNREGSDFILGPTHEETVTLLARDAVQSYKQLPLNIYQIQPKYRDEKRPRNGLLRGREFIMKDGYSFHASYESLDQTYDDYKAAYEAIFTRAGLEFKAIIGDGGAMGGKDSQEFMAITPDRTDLDRWVVLDKSVASFEEIPEDVLEAFKAELLAWSVSGEDTIAYSSESGYAANLEMATSEYKPSTAVVVEEDLVKVATPDAKTIDEVAAFLNVAEEQTIKTMLFMADGEPVVALLVGNDQVNDVKLKNHLAADFFDVASPADAEKVFGAGFGSLGPVGLPENIKIIADRKVQDVKNAVVGANEDGFHYTGANAGRDFQVTEYVDIREVKEGEPSPDGHGVLNFARGIEIGHIFKLGTRYSDSMNANILDENGRSMPIIMGCYGIGVSRLLSAVLEQHARLFVNKTPKGEYRYAWGINFPKELAPFDVHLIPVNVKDEAAMELTQSIEASLVGAGYEVLTDDRNERVGVKFSDSDLIGLPIRVTVGKKAADGIVEVKIKGTGDTVEVHVDQLLETLQILTKENE</sequence>
<proteinExistence type="inferred from homology"/>
<dbReference type="EC" id="6.1.1.15" evidence="1"/>
<dbReference type="EMBL" id="CP000408">
    <property type="protein sequence ID" value="ABP93124.1"/>
    <property type="molecule type" value="Genomic_DNA"/>
</dbReference>
<dbReference type="SMR" id="A4W435"/>
<dbReference type="KEGG" id="ssv:SSU98_1966"/>
<dbReference type="HOGENOM" id="CLU_016739_0_0_9"/>
<dbReference type="GO" id="GO:0005829">
    <property type="term" value="C:cytosol"/>
    <property type="evidence" value="ECO:0007669"/>
    <property type="project" value="TreeGrafter"/>
</dbReference>
<dbReference type="GO" id="GO:0002161">
    <property type="term" value="F:aminoacyl-tRNA deacylase activity"/>
    <property type="evidence" value="ECO:0007669"/>
    <property type="project" value="InterPro"/>
</dbReference>
<dbReference type="GO" id="GO:0005524">
    <property type="term" value="F:ATP binding"/>
    <property type="evidence" value="ECO:0007669"/>
    <property type="project" value="UniProtKB-UniRule"/>
</dbReference>
<dbReference type="GO" id="GO:0140096">
    <property type="term" value="F:catalytic activity, acting on a protein"/>
    <property type="evidence" value="ECO:0007669"/>
    <property type="project" value="UniProtKB-ARBA"/>
</dbReference>
<dbReference type="GO" id="GO:0004827">
    <property type="term" value="F:proline-tRNA ligase activity"/>
    <property type="evidence" value="ECO:0007669"/>
    <property type="project" value="UniProtKB-UniRule"/>
</dbReference>
<dbReference type="GO" id="GO:0016740">
    <property type="term" value="F:transferase activity"/>
    <property type="evidence" value="ECO:0007669"/>
    <property type="project" value="UniProtKB-ARBA"/>
</dbReference>
<dbReference type="GO" id="GO:0006433">
    <property type="term" value="P:prolyl-tRNA aminoacylation"/>
    <property type="evidence" value="ECO:0007669"/>
    <property type="project" value="UniProtKB-UniRule"/>
</dbReference>
<dbReference type="CDD" id="cd04334">
    <property type="entry name" value="ProRS-INS"/>
    <property type="match status" value="1"/>
</dbReference>
<dbReference type="CDD" id="cd00861">
    <property type="entry name" value="ProRS_anticodon_short"/>
    <property type="match status" value="1"/>
</dbReference>
<dbReference type="CDD" id="cd00779">
    <property type="entry name" value="ProRS_core_prok"/>
    <property type="match status" value="1"/>
</dbReference>
<dbReference type="FunFam" id="3.40.50.800:FF:000011">
    <property type="entry name" value="Proline--tRNA ligase"/>
    <property type="match status" value="1"/>
</dbReference>
<dbReference type="Gene3D" id="3.40.50.800">
    <property type="entry name" value="Anticodon-binding domain"/>
    <property type="match status" value="1"/>
</dbReference>
<dbReference type="Gene3D" id="3.30.930.10">
    <property type="entry name" value="Bira Bifunctional Protein, Domain 2"/>
    <property type="match status" value="2"/>
</dbReference>
<dbReference type="Gene3D" id="3.90.960.10">
    <property type="entry name" value="YbaK/aminoacyl-tRNA synthetase-associated domain"/>
    <property type="match status" value="1"/>
</dbReference>
<dbReference type="HAMAP" id="MF_01569">
    <property type="entry name" value="Pro_tRNA_synth_type1"/>
    <property type="match status" value="1"/>
</dbReference>
<dbReference type="InterPro" id="IPR002314">
    <property type="entry name" value="aa-tRNA-synt_IIb"/>
</dbReference>
<dbReference type="InterPro" id="IPR006195">
    <property type="entry name" value="aa-tRNA-synth_II"/>
</dbReference>
<dbReference type="InterPro" id="IPR045864">
    <property type="entry name" value="aa-tRNA-synth_II/BPL/LPL"/>
</dbReference>
<dbReference type="InterPro" id="IPR004154">
    <property type="entry name" value="Anticodon-bd"/>
</dbReference>
<dbReference type="InterPro" id="IPR036621">
    <property type="entry name" value="Anticodon-bd_dom_sf"/>
</dbReference>
<dbReference type="InterPro" id="IPR002316">
    <property type="entry name" value="Pro-tRNA-ligase_IIa"/>
</dbReference>
<dbReference type="InterPro" id="IPR004500">
    <property type="entry name" value="Pro-tRNA-synth_IIa_bac-type"/>
</dbReference>
<dbReference type="InterPro" id="IPR023717">
    <property type="entry name" value="Pro-tRNA-Synthase_IIa_type1"/>
</dbReference>
<dbReference type="InterPro" id="IPR050062">
    <property type="entry name" value="Pro-tRNA_synthetase"/>
</dbReference>
<dbReference type="InterPro" id="IPR044140">
    <property type="entry name" value="ProRS_anticodon_short"/>
</dbReference>
<dbReference type="InterPro" id="IPR033730">
    <property type="entry name" value="ProRS_core_prok"/>
</dbReference>
<dbReference type="InterPro" id="IPR036754">
    <property type="entry name" value="YbaK/aa-tRNA-synt-asso_dom_sf"/>
</dbReference>
<dbReference type="InterPro" id="IPR007214">
    <property type="entry name" value="YbaK/aa-tRNA-synth-assoc-dom"/>
</dbReference>
<dbReference type="NCBIfam" id="NF006625">
    <property type="entry name" value="PRK09194.1"/>
    <property type="match status" value="1"/>
</dbReference>
<dbReference type="NCBIfam" id="TIGR00409">
    <property type="entry name" value="proS_fam_II"/>
    <property type="match status" value="2"/>
</dbReference>
<dbReference type="PANTHER" id="PTHR42753">
    <property type="entry name" value="MITOCHONDRIAL RIBOSOME PROTEIN L39/PROLYL-TRNA LIGASE FAMILY MEMBER"/>
    <property type="match status" value="1"/>
</dbReference>
<dbReference type="PANTHER" id="PTHR42753:SF2">
    <property type="entry name" value="PROLINE--TRNA LIGASE"/>
    <property type="match status" value="1"/>
</dbReference>
<dbReference type="Pfam" id="PF03129">
    <property type="entry name" value="HGTP_anticodon"/>
    <property type="match status" value="1"/>
</dbReference>
<dbReference type="Pfam" id="PF00587">
    <property type="entry name" value="tRNA-synt_2b"/>
    <property type="match status" value="1"/>
</dbReference>
<dbReference type="Pfam" id="PF04073">
    <property type="entry name" value="tRNA_edit"/>
    <property type="match status" value="1"/>
</dbReference>
<dbReference type="PRINTS" id="PR01046">
    <property type="entry name" value="TRNASYNTHPRO"/>
</dbReference>
<dbReference type="SUPFAM" id="SSF52954">
    <property type="entry name" value="Class II aaRS ABD-related"/>
    <property type="match status" value="1"/>
</dbReference>
<dbReference type="SUPFAM" id="SSF55681">
    <property type="entry name" value="Class II aaRS and biotin synthetases"/>
    <property type="match status" value="1"/>
</dbReference>
<dbReference type="SUPFAM" id="SSF55826">
    <property type="entry name" value="YbaK/ProRS associated domain"/>
    <property type="match status" value="1"/>
</dbReference>
<dbReference type="PROSITE" id="PS50862">
    <property type="entry name" value="AA_TRNA_LIGASE_II"/>
    <property type="match status" value="1"/>
</dbReference>
<gene>
    <name evidence="1" type="primary">proS</name>
    <name type="ordered locus">SSU98_1966</name>
</gene>
<keyword id="KW-0030">Aminoacyl-tRNA synthetase</keyword>
<keyword id="KW-0067">ATP-binding</keyword>
<keyword id="KW-0963">Cytoplasm</keyword>
<keyword id="KW-0436">Ligase</keyword>
<keyword id="KW-0547">Nucleotide-binding</keyword>
<keyword id="KW-0648">Protein biosynthesis</keyword>
<reference key="1">
    <citation type="journal article" date="2007" name="PLoS ONE">
        <title>A glimpse of streptococcal toxic shock syndrome from comparative genomics of S. suis 2 Chinese isolates.</title>
        <authorList>
            <person name="Chen C."/>
            <person name="Tang J."/>
            <person name="Dong W."/>
            <person name="Wang C."/>
            <person name="Feng Y."/>
            <person name="Wang J."/>
            <person name="Zheng F."/>
            <person name="Pan X."/>
            <person name="Liu D."/>
            <person name="Li M."/>
            <person name="Song Y."/>
            <person name="Zhu X."/>
            <person name="Sun H."/>
            <person name="Feng T."/>
            <person name="Guo Z."/>
            <person name="Ju A."/>
            <person name="Ge J."/>
            <person name="Dong Y."/>
            <person name="Sun W."/>
            <person name="Jiang Y."/>
            <person name="Wang J."/>
            <person name="Yan J."/>
            <person name="Yang H."/>
            <person name="Wang X."/>
            <person name="Gao G.F."/>
            <person name="Yang R."/>
            <person name="Wang J."/>
            <person name="Yu J."/>
        </authorList>
    </citation>
    <scope>NUCLEOTIDE SEQUENCE [LARGE SCALE GENOMIC DNA]</scope>
    <source>
        <strain>98HAH33</strain>
    </source>
</reference>
<feature type="chain" id="PRO_1000069164" description="Proline--tRNA ligase">
    <location>
        <begin position="1"/>
        <end position="620"/>
    </location>
</feature>